<reference key="1">
    <citation type="journal article" date="2007" name="PLoS Genet.">
        <title>Patterns and implications of gene gain and loss in the evolution of Prochlorococcus.</title>
        <authorList>
            <person name="Kettler G.C."/>
            <person name="Martiny A.C."/>
            <person name="Huang K."/>
            <person name="Zucker J."/>
            <person name="Coleman M.L."/>
            <person name="Rodrigue S."/>
            <person name="Chen F."/>
            <person name="Lapidus A."/>
            <person name="Ferriera S."/>
            <person name="Johnson J."/>
            <person name="Steglich C."/>
            <person name="Church G.M."/>
            <person name="Richardson P."/>
            <person name="Chisholm S.W."/>
        </authorList>
    </citation>
    <scope>NUCLEOTIDE SEQUENCE [LARGE SCALE GENOMIC DNA]</scope>
    <source>
        <strain>AS9601</strain>
    </source>
</reference>
<organism>
    <name type="scientific">Prochlorococcus marinus (strain AS9601)</name>
    <dbReference type="NCBI Taxonomy" id="146891"/>
    <lineage>
        <taxon>Bacteria</taxon>
        <taxon>Bacillati</taxon>
        <taxon>Cyanobacteriota</taxon>
        <taxon>Cyanophyceae</taxon>
        <taxon>Synechococcales</taxon>
        <taxon>Prochlorococcaceae</taxon>
        <taxon>Prochlorococcus</taxon>
    </lineage>
</organism>
<accession>A2BPB2</accession>
<keyword id="KW-0067">ATP-binding</keyword>
<keyword id="KW-0963">Cytoplasm</keyword>
<keyword id="KW-0460">Magnesium</keyword>
<keyword id="KW-0479">Metal-binding</keyword>
<keyword id="KW-0547">Nucleotide-binding</keyword>
<keyword id="KW-0554">One-carbon metabolism</keyword>
<keyword id="KW-0630">Potassium</keyword>
<keyword id="KW-0808">Transferase</keyword>
<sequence length="413" mass="45201">MSDFIFTSESVTEGHPDKICDQISDAVLDALLTEDPESRVACETVVNTGLCLLTGEITSKAKVDYIKLVRNVIKEIGYEGYRAGGFDANSCAVLVALDEQSPDISQGVNEADDVNDDLEDNTGAGDQGIMFGYACDETPELMPLPISLAHRLAIQLSKVRHENMLNYLLPDGKTQVSIDYKNGVPLSINTILISTQHNPEIDGITNEEEIRQRIKEDLWKNVVLPATEDLEIKPNIQTTRFLVNPTGKFVVGGPQGDAGLTGRKIIVDTYGGYARHGGGAFSGKDPTKVDRSAAYAARYVAKSIVKAKLAKKAEVQLSYAIGVAKPISILVETFDTGVISQANLTELINKYFDLRPAAIIKEFDLRNLPQKMGGTFFRKTASYGHFGRRDLDLPWEKVEEKAAQLAEASKVFL</sequence>
<feature type="chain" id="PRO_0000302958" description="S-adenosylmethionine synthase">
    <location>
        <begin position="1"/>
        <end position="413"/>
    </location>
</feature>
<feature type="region of interest" description="Flexible loop" evidence="1">
    <location>
        <begin position="100"/>
        <end position="110"/>
    </location>
</feature>
<feature type="binding site" description="in other chain" evidence="1">
    <location>
        <position position="15"/>
    </location>
    <ligand>
        <name>ATP</name>
        <dbReference type="ChEBI" id="CHEBI:30616"/>
        <note>ligand shared between two neighboring subunits</note>
    </ligand>
</feature>
<feature type="binding site" evidence="1">
    <location>
        <position position="17"/>
    </location>
    <ligand>
        <name>Mg(2+)</name>
        <dbReference type="ChEBI" id="CHEBI:18420"/>
    </ligand>
</feature>
<feature type="binding site" evidence="1">
    <location>
        <position position="43"/>
    </location>
    <ligand>
        <name>K(+)</name>
        <dbReference type="ChEBI" id="CHEBI:29103"/>
    </ligand>
</feature>
<feature type="binding site" description="in other chain" evidence="1">
    <location>
        <position position="56"/>
    </location>
    <ligand>
        <name>L-methionine</name>
        <dbReference type="ChEBI" id="CHEBI:57844"/>
        <note>ligand shared between two neighboring subunits</note>
    </ligand>
</feature>
<feature type="binding site" description="in other chain" evidence="1">
    <location>
        <position position="100"/>
    </location>
    <ligand>
        <name>L-methionine</name>
        <dbReference type="ChEBI" id="CHEBI:57844"/>
        <note>ligand shared between two neighboring subunits</note>
    </ligand>
</feature>
<feature type="binding site" description="in other chain" evidence="1">
    <location>
        <begin position="171"/>
        <end position="173"/>
    </location>
    <ligand>
        <name>ATP</name>
        <dbReference type="ChEBI" id="CHEBI:30616"/>
        <note>ligand shared between two neighboring subunits</note>
    </ligand>
</feature>
<feature type="binding site" description="in other chain" evidence="1">
    <location>
        <begin position="248"/>
        <end position="249"/>
    </location>
    <ligand>
        <name>ATP</name>
        <dbReference type="ChEBI" id="CHEBI:30616"/>
        <note>ligand shared between two neighboring subunits</note>
    </ligand>
</feature>
<feature type="binding site" evidence="1">
    <location>
        <position position="257"/>
    </location>
    <ligand>
        <name>ATP</name>
        <dbReference type="ChEBI" id="CHEBI:30616"/>
        <note>ligand shared between two neighboring subunits</note>
    </ligand>
</feature>
<feature type="binding site" evidence="1">
    <location>
        <position position="257"/>
    </location>
    <ligand>
        <name>L-methionine</name>
        <dbReference type="ChEBI" id="CHEBI:57844"/>
        <note>ligand shared between two neighboring subunits</note>
    </ligand>
</feature>
<feature type="binding site" description="in other chain" evidence="1">
    <location>
        <begin position="263"/>
        <end position="264"/>
    </location>
    <ligand>
        <name>ATP</name>
        <dbReference type="ChEBI" id="CHEBI:30616"/>
        <note>ligand shared between two neighboring subunits</note>
    </ligand>
</feature>
<feature type="binding site" evidence="1">
    <location>
        <position position="280"/>
    </location>
    <ligand>
        <name>ATP</name>
        <dbReference type="ChEBI" id="CHEBI:30616"/>
        <note>ligand shared between two neighboring subunits</note>
    </ligand>
</feature>
<feature type="binding site" evidence="1">
    <location>
        <position position="284"/>
    </location>
    <ligand>
        <name>ATP</name>
        <dbReference type="ChEBI" id="CHEBI:30616"/>
        <note>ligand shared between two neighboring subunits</note>
    </ligand>
</feature>
<feature type="binding site" description="in other chain" evidence="1">
    <location>
        <position position="288"/>
    </location>
    <ligand>
        <name>L-methionine</name>
        <dbReference type="ChEBI" id="CHEBI:57844"/>
        <note>ligand shared between two neighboring subunits</note>
    </ligand>
</feature>
<proteinExistence type="inferred from homology"/>
<evidence type="ECO:0000255" key="1">
    <source>
        <dbReference type="HAMAP-Rule" id="MF_00086"/>
    </source>
</evidence>
<dbReference type="EC" id="2.5.1.6" evidence="1"/>
<dbReference type="EMBL" id="CP000551">
    <property type="protein sequence ID" value="ABM69623.1"/>
    <property type="molecule type" value="Genomic_DNA"/>
</dbReference>
<dbReference type="RefSeq" id="WP_011817799.1">
    <property type="nucleotide sequence ID" value="NC_008816.1"/>
</dbReference>
<dbReference type="SMR" id="A2BPB2"/>
<dbReference type="STRING" id="146891.A9601_03351"/>
<dbReference type="KEGG" id="pmb:A9601_03351"/>
<dbReference type="eggNOG" id="COG0192">
    <property type="taxonomic scope" value="Bacteria"/>
</dbReference>
<dbReference type="HOGENOM" id="CLU_041802_1_1_3"/>
<dbReference type="OrthoDB" id="9801686at2"/>
<dbReference type="UniPathway" id="UPA00315">
    <property type="reaction ID" value="UER00080"/>
</dbReference>
<dbReference type="Proteomes" id="UP000002590">
    <property type="component" value="Chromosome"/>
</dbReference>
<dbReference type="GO" id="GO:0005737">
    <property type="term" value="C:cytoplasm"/>
    <property type="evidence" value="ECO:0007669"/>
    <property type="project" value="UniProtKB-SubCell"/>
</dbReference>
<dbReference type="GO" id="GO:0005524">
    <property type="term" value="F:ATP binding"/>
    <property type="evidence" value="ECO:0007669"/>
    <property type="project" value="UniProtKB-UniRule"/>
</dbReference>
<dbReference type="GO" id="GO:0000287">
    <property type="term" value="F:magnesium ion binding"/>
    <property type="evidence" value="ECO:0007669"/>
    <property type="project" value="UniProtKB-UniRule"/>
</dbReference>
<dbReference type="GO" id="GO:0004478">
    <property type="term" value="F:methionine adenosyltransferase activity"/>
    <property type="evidence" value="ECO:0007669"/>
    <property type="project" value="UniProtKB-UniRule"/>
</dbReference>
<dbReference type="GO" id="GO:0006730">
    <property type="term" value="P:one-carbon metabolic process"/>
    <property type="evidence" value="ECO:0007669"/>
    <property type="project" value="UniProtKB-KW"/>
</dbReference>
<dbReference type="GO" id="GO:0006556">
    <property type="term" value="P:S-adenosylmethionine biosynthetic process"/>
    <property type="evidence" value="ECO:0007669"/>
    <property type="project" value="UniProtKB-UniRule"/>
</dbReference>
<dbReference type="CDD" id="cd18079">
    <property type="entry name" value="S-AdoMet_synt"/>
    <property type="match status" value="1"/>
</dbReference>
<dbReference type="FunFam" id="3.30.300.10:FF:000003">
    <property type="entry name" value="S-adenosylmethionine synthase"/>
    <property type="match status" value="1"/>
</dbReference>
<dbReference type="Gene3D" id="3.30.300.10">
    <property type="match status" value="3"/>
</dbReference>
<dbReference type="HAMAP" id="MF_00086">
    <property type="entry name" value="S_AdoMet_synth1"/>
    <property type="match status" value="1"/>
</dbReference>
<dbReference type="InterPro" id="IPR022631">
    <property type="entry name" value="ADOMET_SYNTHASE_CS"/>
</dbReference>
<dbReference type="InterPro" id="IPR022630">
    <property type="entry name" value="S-AdoMet_synt_C"/>
</dbReference>
<dbReference type="InterPro" id="IPR022629">
    <property type="entry name" value="S-AdoMet_synt_central"/>
</dbReference>
<dbReference type="InterPro" id="IPR022628">
    <property type="entry name" value="S-AdoMet_synt_N"/>
</dbReference>
<dbReference type="InterPro" id="IPR002133">
    <property type="entry name" value="S-AdoMet_synthetase"/>
</dbReference>
<dbReference type="InterPro" id="IPR022636">
    <property type="entry name" value="S-AdoMet_synthetase_sfam"/>
</dbReference>
<dbReference type="NCBIfam" id="TIGR01034">
    <property type="entry name" value="metK"/>
    <property type="match status" value="1"/>
</dbReference>
<dbReference type="PANTHER" id="PTHR11964">
    <property type="entry name" value="S-ADENOSYLMETHIONINE SYNTHETASE"/>
    <property type="match status" value="1"/>
</dbReference>
<dbReference type="Pfam" id="PF02773">
    <property type="entry name" value="S-AdoMet_synt_C"/>
    <property type="match status" value="1"/>
</dbReference>
<dbReference type="Pfam" id="PF02772">
    <property type="entry name" value="S-AdoMet_synt_M"/>
    <property type="match status" value="1"/>
</dbReference>
<dbReference type="Pfam" id="PF00438">
    <property type="entry name" value="S-AdoMet_synt_N"/>
    <property type="match status" value="1"/>
</dbReference>
<dbReference type="PIRSF" id="PIRSF000497">
    <property type="entry name" value="MAT"/>
    <property type="match status" value="1"/>
</dbReference>
<dbReference type="SUPFAM" id="SSF55973">
    <property type="entry name" value="S-adenosylmethionine synthetase"/>
    <property type="match status" value="3"/>
</dbReference>
<dbReference type="PROSITE" id="PS00376">
    <property type="entry name" value="ADOMET_SYNTHASE_1"/>
    <property type="match status" value="1"/>
</dbReference>
<dbReference type="PROSITE" id="PS00377">
    <property type="entry name" value="ADOMET_SYNTHASE_2"/>
    <property type="match status" value="1"/>
</dbReference>
<name>METK_PROMS</name>
<protein>
    <recommendedName>
        <fullName evidence="1">S-adenosylmethionine synthase</fullName>
        <shortName evidence="1">AdoMet synthase</shortName>
        <ecNumber evidence="1">2.5.1.6</ecNumber>
    </recommendedName>
    <alternativeName>
        <fullName evidence="1">MAT</fullName>
    </alternativeName>
    <alternativeName>
        <fullName evidence="1">Methionine adenosyltransferase</fullName>
    </alternativeName>
</protein>
<gene>
    <name evidence="1" type="primary">metK</name>
    <name type="ordered locus">A9601_03351</name>
</gene>
<comment type="function">
    <text evidence="1">Catalyzes the formation of S-adenosylmethionine (AdoMet) from methionine and ATP. The overall synthetic reaction is composed of two sequential steps, AdoMet formation and the subsequent tripolyphosphate hydrolysis which occurs prior to release of AdoMet from the enzyme.</text>
</comment>
<comment type="catalytic activity">
    <reaction evidence="1">
        <text>L-methionine + ATP + H2O = S-adenosyl-L-methionine + phosphate + diphosphate</text>
        <dbReference type="Rhea" id="RHEA:21080"/>
        <dbReference type="ChEBI" id="CHEBI:15377"/>
        <dbReference type="ChEBI" id="CHEBI:30616"/>
        <dbReference type="ChEBI" id="CHEBI:33019"/>
        <dbReference type="ChEBI" id="CHEBI:43474"/>
        <dbReference type="ChEBI" id="CHEBI:57844"/>
        <dbReference type="ChEBI" id="CHEBI:59789"/>
        <dbReference type="EC" id="2.5.1.6"/>
    </reaction>
</comment>
<comment type="cofactor">
    <cofactor evidence="1">
        <name>Mg(2+)</name>
        <dbReference type="ChEBI" id="CHEBI:18420"/>
    </cofactor>
    <text evidence="1">Binds 2 divalent ions per subunit.</text>
</comment>
<comment type="cofactor">
    <cofactor evidence="1">
        <name>K(+)</name>
        <dbReference type="ChEBI" id="CHEBI:29103"/>
    </cofactor>
    <text evidence="1">Binds 1 potassium ion per subunit.</text>
</comment>
<comment type="pathway">
    <text evidence="1">Amino-acid biosynthesis; S-adenosyl-L-methionine biosynthesis; S-adenosyl-L-methionine from L-methionine: step 1/1.</text>
</comment>
<comment type="subunit">
    <text evidence="1">Homotetramer; dimer of dimers.</text>
</comment>
<comment type="subcellular location">
    <subcellularLocation>
        <location evidence="1">Cytoplasm</location>
    </subcellularLocation>
</comment>
<comment type="similarity">
    <text evidence="1">Belongs to the AdoMet synthase family.</text>
</comment>